<name>PTER_MOUSE</name>
<organism>
    <name type="scientific">Mus musculus</name>
    <name type="common">Mouse</name>
    <dbReference type="NCBI Taxonomy" id="10090"/>
    <lineage>
        <taxon>Eukaryota</taxon>
        <taxon>Metazoa</taxon>
        <taxon>Chordata</taxon>
        <taxon>Craniata</taxon>
        <taxon>Vertebrata</taxon>
        <taxon>Euteleostomi</taxon>
        <taxon>Mammalia</taxon>
        <taxon>Eutheria</taxon>
        <taxon>Euarchontoglires</taxon>
        <taxon>Glires</taxon>
        <taxon>Rodentia</taxon>
        <taxon>Myomorpha</taxon>
        <taxon>Muroidea</taxon>
        <taxon>Muridae</taxon>
        <taxon>Murinae</taxon>
        <taxon>Mus</taxon>
        <taxon>Mus</taxon>
    </lineage>
</organism>
<proteinExistence type="evidence at protein level"/>
<dbReference type="EC" id="3.1.-.-" evidence="3"/>
<dbReference type="EMBL" id="U28016">
    <property type="protein sequence ID" value="AAA68951.1"/>
    <property type="molecule type" value="mRNA"/>
</dbReference>
<dbReference type="EMBL" id="AK012076">
    <property type="protein sequence ID" value="BAC25353.1"/>
    <property type="molecule type" value="mRNA"/>
</dbReference>
<dbReference type="EMBL" id="AL929209">
    <property type="status" value="NOT_ANNOTATED_CDS"/>
    <property type="molecule type" value="Genomic_DNA"/>
</dbReference>
<dbReference type="EMBL" id="CH466542">
    <property type="protein sequence ID" value="EDL08046.1"/>
    <property type="molecule type" value="Genomic_DNA"/>
</dbReference>
<dbReference type="EMBL" id="BC003793">
    <property type="protein sequence ID" value="AAH03793.1"/>
    <property type="molecule type" value="mRNA"/>
</dbReference>
<dbReference type="CCDS" id="CCDS15691.1">
    <molecule id="Q60866-1"/>
</dbReference>
<dbReference type="CCDS" id="CCDS84471.1">
    <molecule id="Q60866-2"/>
</dbReference>
<dbReference type="RefSeq" id="NP_001292365.1">
    <molecule id="Q60866-2"/>
    <property type="nucleotide sequence ID" value="NM_001305436.1"/>
</dbReference>
<dbReference type="RefSeq" id="NP_001292366.1">
    <property type="nucleotide sequence ID" value="NM_001305437.1"/>
</dbReference>
<dbReference type="RefSeq" id="NP_032987.1">
    <molecule id="Q60866-1"/>
    <property type="nucleotide sequence ID" value="NM_008961.3"/>
</dbReference>
<dbReference type="SMR" id="Q60866"/>
<dbReference type="BioGRID" id="202450">
    <property type="interactions" value="1"/>
</dbReference>
<dbReference type="FunCoup" id="Q60866">
    <property type="interactions" value="64"/>
</dbReference>
<dbReference type="IntAct" id="Q60866">
    <property type="interactions" value="1"/>
</dbReference>
<dbReference type="STRING" id="10090.ENSMUSP00000117009"/>
<dbReference type="GlyGen" id="Q60866">
    <property type="glycosylation" value="1 site, 1 O-linked glycan (1 site)"/>
</dbReference>
<dbReference type="iPTMnet" id="Q60866"/>
<dbReference type="PhosphoSitePlus" id="Q60866"/>
<dbReference type="SwissPalm" id="Q60866"/>
<dbReference type="REPRODUCTION-2DPAGE" id="Q60866"/>
<dbReference type="jPOST" id="Q60866"/>
<dbReference type="PaxDb" id="10090-ENSMUSP00000117009"/>
<dbReference type="PeptideAtlas" id="Q60866"/>
<dbReference type="ProteomicsDB" id="301895">
    <molecule id="Q60866-1"/>
</dbReference>
<dbReference type="ProteomicsDB" id="301896">
    <molecule id="Q60866-2"/>
</dbReference>
<dbReference type="Pumba" id="Q60866"/>
<dbReference type="Antibodypedia" id="25152">
    <property type="antibodies" value="115 antibodies from 27 providers"/>
</dbReference>
<dbReference type="DNASU" id="19212"/>
<dbReference type="Ensembl" id="ENSMUST00000028063.7">
    <molecule id="Q60866-2"/>
    <property type="protein sequence ID" value="ENSMUSP00000028063.5"/>
    <property type="gene ID" value="ENSMUSG00000026730.13"/>
</dbReference>
<dbReference type="Ensembl" id="ENSMUST00000134794.8">
    <molecule id="Q60866-1"/>
    <property type="protein sequence ID" value="ENSMUSP00000117009.2"/>
    <property type="gene ID" value="ENSMUSG00000026730.13"/>
</dbReference>
<dbReference type="GeneID" id="19212"/>
<dbReference type="KEGG" id="mmu:19212"/>
<dbReference type="UCSC" id="uc008ijt.2">
    <molecule id="Q60866-1"/>
    <property type="organism name" value="mouse"/>
</dbReference>
<dbReference type="UCSC" id="uc012bqx.2">
    <molecule id="Q60866-2"/>
    <property type="organism name" value="mouse"/>
</dbReference>
<dbReference type="AGR" id="MGI:107372"/>
<dbReference type="CTD" id="9317"/>
<dbReference type="MGI" id="MGI:107372">
    <property type="gene designation" value="Pter"/>
</dbReference>
<dbReference type="VEuPathDB" id="HostDB:ENSMUSG00000026730"/>
<dbReference type="eggNOG" id="ENOG502QQQR">
    <property type="taxonomic scope" value="Eukaryota"/>
</dbReference>
<dbReference type="GeneTree" id="ENSGT00390000006960"/>
<dbReference type="InParanoid" id="Q60866"/>
<dbReference type="OMA" id="MVKCGFI"/>
<dbReference type="OrthoDB" id="9998343at2759"/>
<dbReference type="PhylomeDB" id="Q60866"/>
<dbReference type="TreeFam" id="TF323205"/>
<dbReference type="BioGRID-ORCS" id="19212">
    <property type="hits" value="0 hits in 60 CRISPR screens"/>
</dbReference>
<dbReference type="ChiTaRS" id="Pter">
    <property type="organism name" value="mouse"/>
</dbReference>
<dbReference type="PRO" id="PR:Q60866"/>
<dbReference type="Proteomes" id="UP000000589">
    <property type="component" value="Chromosome 2"/>
</dbReference>
<dbReference type="RNAct" id="Q60866">
    <property type="molecule type" value="protein"/>
</dbReference>
<dbReference type="Bgee" id="ENSMUSG00000026730">
    <property type="expression patterns" value="Expressed in right kidney and 220 other cell types or tissues"/>
</dbReference>
<dbReference type="ExpressionAtlas" id="Q60866">
    <property type="expression patterns" value="baseline and differential"/>
</dbReference>
<dbReference type="GO" id="GO:0005829">
    <property type="term" value="C:cytosol"/>
    <property type="evidence" value="ECO:0000314"/>
    <property type="project" value="UniProtKB"/>
</dbReference>
<dbReference type="GO" id="GO:0141215">
    <property type="term" value="F:N-acetyltaurine hydrolase activity"/>
    <property type="evidence" value="ECO:0000314"/>
    <property type="project" value="UniProtKB"/>
</dbReference>
<dbReference type="GO" id="GO:0008270">
    <property type="term" value="F:zinc ion binding"/>
    <property type="evidence" value="ECO:0007669"/>
    <property type="project" value="InterPro"/>
</dbReference>
<dbReference type="GO" id="GO:0009056">
    <property type="term" value="P:catabolic process"/>
    <property type="evidence" value="ECO:0007669"/>
    <property type="project" value="InterPro"/>
</dbReference>
<dbReference type="GO" id="GO:0030855">
    <property type="term" value="P:epithelial cell differentiation"/>
    <property type="evidence" value="ECO:0007669"/>
    <property type="project" value="Ensembl"/>
</dbReference>
<dbReference type="GO" id="GO:0032098">
    <property type="term" value="P:regulation of appetite"/>
    <property type="evidence" value="ECO:0000315"/>
    <property type="project" value="UniProtKB"/>
</dbReference>
<dbReference type="GO" id="GO:0019530">
    <property type="term" value="P:taurine metabolic process"/>
    <property type="evidence" value="ECO:0000314"/>
    <property type="project" value="UniProtKB"/>
</dbReference>
<dbReference type="CDD" id="cd00530">
    <property type="entry name" value="PTE"/>
    <property type="match status" value="1"/>
</dbReference>
<dbReference type="Gene3D" id="3.20.20.140">
    <property type="entry name" value="Metal-dependent hydrolases"/>
    <property type="match status" value="1"/>
</dbReference>
<dbReference type="InterPro" id="IPR017947">
    <property type="entry name" value="AryldialkylPase_Zn-BS"/>
</dbReference>
<dbReference type="InterPro" id="IPR032466">
    <property type="entry name" value="Metal_Hydrolase"/>
</dbReference>
<dbReference type="InterPro" id="IPR001559">
    <property type="entry name" value="Phosphotriesterase"/>
</dbReference>
<dbReference type="PANTHER" id="PTHR10819">
    <property type="entry name" value="PHOSPHOTRIESTERASE-RELATED"/>
    <property type="match status" value="1"/>
</dbReference>
<dbReference type="PANTHER" id="PTHR10819:SF3">
    <property type="entry name" value="PHOSPHOTRIESTERASE-RELATED PROTEIN"/>
    <property type="match status" value="1"/>
</dbReference>
<dbReference type="Pfam" id="PF02126">
    <property type="entry name" value="PTE"/>
    <property type="match status" value="1"/>
</dbReference>
<dbReference type="SUPFAM" id="SSF51556">
    <property type="entry name" value="Metallo-dependent hydrolases"/>
    <property type="match status" value="1"/>
</dbReference>
<dbReference type="PROSITE" id="PS01322">
    <property type="entry name" value="PHOSPHOTRIESTERASE_1"/>
    <property type="match status" value="1"/>
</dbReference>
<dbReference type="PROSITE" id="PS51347">
    <property type="entry name" value="PHOSPHOTRIESTERASE_2"/>
    <property type="match status" value="1"/>
</dbReference>
<gene>
    <name evidence="6 9" type="primary">Pter</name>
</gene>
<comment type="function">
    <text evidence="3">N-acetyltaurine hydrolase that regulates feeding by catalyzing the hydrolysis of N-acetyltaurine into taurine and acetate (PubMed:39112712). N-acetyltaurine has anorexigenic and anti-obesity effects that are dependent on GFRAL receptor and GDF15 (PubMed:39112712). PTER also acts on other N-acetyl amino acids (Met, Ile, Leu, Val) and N-propionyltaurine, but at lower rates (PubMed:39112712).</text>
</comment>
<comment type="catalytic activity">
    <reaction evidence="3">
        <text>N-acetyltaurine + H2O = taurine + acetate</text>
        <dbReference type="Rhea" id="RHEA:81107"/>
        <dbReference type="ChEBI" id="CHEBI:15377"/>
        <dbReference type="ChEBI" id="CHEBI:30089"/>
        <dbReference type="ChEBI" id="CHEBI:133737"/>
        <dbReference type="ChEBI" id="CHEBI:507393"/>
    </reaction>
    <physiologicalReaction direction="left-to-right" evidence="3">
        <dbReference type="Rhea" id="RHEA:81108"/>
    </physiologicalReaction>
</comment>
<comment type="catalytic activity">
    <reaction evidence="3">
        <text>N-propanoyltaurine + H2O = propanoate + taurine</text>
        <dbReference type="Rhea" id="RHEA:81111"/>
        <dbReference type="ChEBI" id="CHEBI:15377"/>
        <dbReference type="ChEBI" id="CHEBI:17272"/>
        <dbReference type="ChEBI" id="CHEBI:231795"/>
        <dbReference type="ChEBI" id="CHEBI:507393"/>
    </reaction>
    <physiologicalReaction direction="left-to-right" evidence="3">
        <dbReference type="Rhea" id="RHEA:81112"/>
    </physiologicalReaction>
</comment>
<comment type="catalytic activity">
    <reaction evidence="3">
        <text>N-acetyl-L-methionine + H2O = L-methionine + acetate</text>
        <dbReference type="Rhea" id="RHEA:67440"/>
        <dbReference type="ChEBI" id="CHEBI:15377"/>
        <dbReference type="ChEBI" id="CHEBI:30089"/>
        <dbReference type="ChEBI" id="CHEBI:57844"/>
        <dbReference type="ChEBI" id="CHEBI:71670"/>
    </reaction>
    <physiologicalReaction direction="left-to-right" evidence="3">
        <dbReference type="Rhea" id="RHEA:67441"/>
    </physiologicalReaction>
</comment>
<comment type="catalytic activity">
    <reaction evidence="3">
        <text>N-acetyl-L-isoleucine + H2O = L-isoleucine + acetate</text>
        <dbReference type="Rhea" id="RHEA:81119"/>
        <dbReference type="ChEBI" id="CHEBI:15377"/>
        <dbReference type="ChEBI" id="CHEBI:30089"/>
        <dbReference type="ChEBI" id="CHEBI:58045"/>
        <dbReference type="ChEBI" id="CHEBI:133735"/>
    </reaction>
    <physiologicalReaction direction="left-to-right" evidence="3">
        <dbReference type="Rhea" id="RHEA:81120"/>
    </physiologicalReaction>
</comment>
<comment type="catalytic activity">
    <reaction evidence="3">
        <text>N-acetyl-L-leucine + H2O = L-leucine + acetate</text>
        <dbReference type="Rhea" id="RHEA:81115"/>
        <dbReference type="ChEBI" id="CHEBI:15377"/>
        <dbReference type="ChEBI" id="CHEBI:30089"/>
        <dbReference type="ChEBI" id="CHEBI:57427"/>
        <dbReference type="ChEBI" id="CHEBI:58270"/>
    </reaction>
    <physiologicalReaction direction="left-to-right" evidence="3">
        <dbReference type="Rhea" id="RHEA:81116"/>
    </physiologicalReaction>
</comment>
<comment type="catalytic activity">
    <reaction evidence="3">
        <text>N-acetyl-L-valine + H2O = L-valine + acetate</text>
        <dbReference type="Rhea" id="RHEA:81123"/>
        <dbReference type="ChEBI" id="CHEBI:15377"/>
        <dbReference type="ChEBI" id="CHEBI:30089"/>
        <dbReference type="ChEBI" id="CHEBI:57762"/>
        <dbReference type="ChEBI" id="CHEBI:133716"/>
    </reaction>
    <physiologicalReaction direction="left-to-right" evidence="3">
        <dbReference type="Rhea" id="RHEA:81124"/>
    </physiologicalReaction>
</comment>
<comment type="cofactor">
    <cofactor evidence="1">
        <name>a divalent metal cation</name>
        <dbReference type="ChEBI" id="CHEBI:60240"/>
    </cofactor>
    <text evidence="1">Binds 2 divalent metal cations per subunit.</text>
</comment>
<comment type="biophysicochemical properties">
    <kinetics>
        <KM evidence="3">430 uM for N-acetyltaurine</KM>
        <Vmax evidence="3">3.7 nmol/min/mg enzyme</Vmax>
        <text evidence="3">kcat is 2.6 sec(-1) with N-acetyltaurine.</text>
    </kinetics>
</comment>
<comment type="subcellular location">
    <subcellularLocation>
        <location evidence="3">Cytoplasm</location>
        <location evidence="3">Cytosol</location>
    </subcellularLocation>
</comment>
<comment type="alternative products">
    <event type="alternative splicing"/>
    <isoform>
        <id>Q60866-1</id>
        <name>1</name>
        <sequence type="displayed"/>
    </isoform>
    <isoform>
        <id>Q60866-2</id>
        <name>2</name>
        <sequence type="described" ref="VSP_038343 VSP_038344"/>
    </isoform>
</comment>
<comment type="tissue specificity">
    <text evidence="3 4">Expressed in the kidney, liver and brainstem.</text>
</comment>
<comment type="disruption phenotype">
    <text evidence="3">Mice show reduced food intake, resistance to diet-induced obesity and improved glucose homeostasis in response to stimuli that increase taurine levels (PubMed:39112712). Complete loss of tissue N-acetyltaurine hydrolysis activity and a significant increase in N-acetyltaurine levels (PubMed:39112712).</text>
</comment>
<comment type="similarity">
    <text evidence="2">Belongs to the metallo-dependent hydrolases superfamily. Phosphotriesterase family.</text>
</comment>
<feature type="chain" id="PRO_0000205365" description="N-acetyltaurine hydrolase">
    <location>
        <begin position="1"/>
        <end position="349"/>
    </location>
</feature>
<feature type="binding site" evidence="1">
    <location>
        <position position="26"/>
    </location>
    <ligand>
        <name>a divalent metal cation</name>
        <dbReference type="ChEBI" id="CHEBI:60240"/>
        <label>1</label>
    </ligand>
</feature>
<feature type="binding site" evidence="1">
    <location>
        <position position="28"/>
    </location>
    <ligand>
        <name>a divalent metal cation</name>
        <dbReference type="ChEBI" id="CHEBI:60240"/>
        <label>1</label>
    </ligand>
</feature>
<feature type="binding site" evidence="1">
    <location>
        <position position="169"/>
    </location>
    <ligand>
        <name>a divalent metal cation</name>
        <dbReference type="ChEBI" id="CHEBI:60240"/>
        <label>1</label>
    </ligand>
</feature>
<feature type="binding site" evidence="1">
    <location>
        <position position="169"/>
    </location>
    <ligand>
        <name>a divalent metal cation</name>
        <dbReference type="ChEBI" id="CHEBI:60240"/>
        <label>2</label>
    </ligand>
</feature>
<feature type="binding site" evidence="1">
    <location>
        <position position="201"/>
    </location>
    <ligand>
        <name>a divalent metal cation</name>
        <dbReference type="ChEBI" id="CHEBI:60240"/>
        <label>2</label>
    </ligand>
</feature>
<feature type="binding site" evidence="1">
    <location>
        <position position="230"/>
    </location>
    <ligand>
        <name>a divalent metal cation</name>
        <dbReference type="ChEBI" id="CHEBI:60240"/>
        <label>2</label>
    </ligand>
</feature>
<feature type="binding site" evidence="1">
    <location>
        <position position="298"/>
    </location>
    <ligand>
        <name>a divalent metal cation</name>
        <dbReference type="ChEBI" id="CHEBI:60240"/>
        <label>1</label>
    </ligand>
</feature>
<feature type="splice variant" id="VSP_038343" description="In isoform 2." evidence="5">
    <original>TEL</original>
    <variation>SIF</variation>
    <location>
        <begin position="258"/>
        <end position="260"/>
    </location>
</feature>
<feature type="splice variant" id="VSP_038344" description="In isoform 2." evidence="5">
    <location>
        <begin position="261"/>
        <end position="349"/>
    </location>
</feature>
<feature type="mutagenesis site" description="Abolished N-acetyltaurine hydrolase activity." evidence="3">
    <original>H</original>
    <variation>F</variation>
    <location>
        <position position="26"/>
    </location>
</feature>
<feature type="mutagenesis site" description="Abolished N-acetyltaurine hydrolase activity." evidence="3">
    <original>H</original>
    <variation>F</variation>
    <location>
        <position position="28"/>
    </location>
</feature>
<feature type="mutagenesis site" description="Abolished N-acetyltaurine hydrolase activity." evidence="3">
    <original>Y</original>
    <variation>F</variation>
    <location>
        <position position="65"/>
    </location>
</feature>
<feature type="mutagenesis site" description="Decreased N-acetyltaurine hydrolase activity." evidence="3">
    <original>E</original>
    <variation>A</variation>
    <location>
        <position position="169"/>
    </location>
</feature>
<feature type="mutagenesis site" description="Abolished N-acetyltaurine hydrolase activity." evidence="3">
    <original>H</original>
    <variation>F</variation>
    <location>
        <position position="201"/>
    </location>
</feature>
<feature type="mutagenesis site" description="Abolished N-acetyltaurine hydrolase activity." evidence="3">
    <original>R</original>
    <variation>A</variation>
    <location>
        <position position="204"/>
    </location>
</feature>
<feature type="mutagenesis site" description="Abolished N-acetyltaurine hydrolase activity." evidence="3">
    <original>H</original>
    <variation>F</variation>
    <location>
        <position position="230"/>
    </location>
</feature>
<feature type="mutagenesis site" description="Abolished N-acetyltaurine hydrolase activity." evidence="3">
    <original>R</original>
    <variation>A</variation>
    <location>
        <position position="233"/>
    </location>
</feature>
<feature type="mutagenesis site" description="Increased N-acetyltaurine hydrolase activity." evidence="3">
    <original>L</original>
    <variation>A</variation>
    <location>
        <position position="255"/>
    </location>
</feature>
<feature type="mutagenesis site" description="Abolished N-acetyltaurine hydrolase activity." evidence="3">
    <original>T</original>
    <variation>G</variation>
    <location>
        <position position="258"/>
    </location>
</feature>
<feature type="mutagenesis site" description="Abolished N-acetyltaurine hydrolase activity." evidence="3">
    <original>L</original>
    <variation>G</variation>
    <location>
        <position position="260"/>
    </location>
</feature>
<feature type="mutagenesis site" description="Abolished N-acetyltaurine hydrolase activity." evidence="3">
    <original>Y</original>
    <variation>F</variation>
    <location>
        <position position="263"/>
    </location>
</feature>
<feature type="mutagenesis site" description="Abolished N-acetyltaurine hydrolase activity." evidence="3">
    <original>D</original>
    <variation>A</variation>
    <location>
        <position position="298"/>
    </location>
</feature>
<feature type="mutagenesis site" description="Abolished N-acetyltaurine hydrolase activity." evidence="3">
    <original>H</original>
    <variation>A</variation>
    <location>
        <position position="300"/>
    </location>
</feature>
<feature type="mutagenesis site" description="Slightly decreased N-acetyltaurine hydrolase activity." evidence="3">
    <original>R</original>
    <variation>K</variation>
    <location>
        <position position="304"/>
    </location>
</feature>
<feature type="sequence conflict" description="In Ref. 2; BAC25353." evidence="8" ref="2">
    <original>P</original>
    <variation>S</variation>
    <location>
        <position position="197"/>
    </location>
</feature>
<sequence>MSSLSGKVQTVLGLVEPSQLGRTLTHEHLTMTFDSFYCPPPPCHEVTSKEPIMMKNLFWIQKNPYSHRENLQLNQEVGAIREELLYFKAKGGGALVENTTTGLSRDVHTLKWLAEQTGVHIIAGAGFYVDATHSAATRAMSVEQLTDVLINEILHGADGTSIKCGVIGEIGCSWPLTDSERKILEATAHAQAQLGCPVIIHPGRNPGAPFQIIRILQEAGADISKTVMSHLDRTIFDKKELLEFAQLGCYLEYDLFGTELLNYQLSPDIDMPDDNKRIRRVHFLVDEGYEDRILMAHDIHTKHRLMKYGGHGYSHILTNIVPKMLLRGLTERVLDKILIENPKQWLTFK</sequence>
<keyword id="KW-0025">Alternative splicing</keyword>
<keyword id="KW-0963">Cytoplasm</keyword>
<keyword id="KW-0378">Hydrolase</keyword>
<keyword id="KW-0479">Metal-binding</keyword>
<keyword id="KW-1185">Reference proteome</keyword>
<protein>
    <recommendedName>
        <fullName evidence="6">N-acetyltaurine hydrolase</fullName>
        <ecNumber evidence="3">3.1.-.-</ecNumber>
    </recommendedName>
    <alternativeName>
        <fullName evidence="7">Parathion hydrolase-related protein</fullName>
    </alternativeName>
    <alternativeName>
        <fullName evidence="6">Phosphotriesterase-related protein</fullName>
    </alternativeName>
</protein>
<evidence type="ECO:0000250" key="1">
    <source>
        <dbReference type="UniProtKB" id="P45548"/>
    </source>
</evidence>
<evidence type="ECO:0000255" key="2">
    <source>
        <dbReference type="PROSITE-ProRule" id="PRU00679"/>
    </source>
</evidence>
<evidence type="ECO:0000269" key="3">
    <source>
    </source>
</evidence>
<evidence type="ECO:0000269" key="4">
    <source>
    </source>
</evidence>
<evidence type="ECO:0000303" key="5">
    <source>
    </source>
</evidence>
<evidence type="ECO:0000303" key="6">
    <source>
    </source>
</evidence>
<evidence type="ECO:0000303" key="7">
    <source>
    </source>
</evidence>
<evidence type="ECO:0000305" key="8"/>
<evidence type="ECO:0000312" key="9">
    <source>
        <dbReference type="MGI" id="MGI:107372"/>
    </source>
</evidence>
<accession>Q60866</accession>
<accession>A2AUR4</accession>
<accession>A2AUR6</accession>
<accession>Q8BTA3</accession>
<reference key="1">
    <citation type="journal article" date="1996" name="Gene">
        <title>A mouse kidney- and liver-expressed cDNA having homology with a prokaryotic parathion hydrolase (phosphotriesterase)-encoding gene: abnormal expression in injured and polycystic kidneys.</title>
        <authorList>
            <person name="Hou X."/>
            <person name="Maser R.L."/>
            <person name="Magenheimer B.S."/>
            <person name="Calvet J.P."/>
        </authorList>
    </citation>
    <scope>NUCLEOTIDE SEQUENCE [MRNA] (ISOFORM 1)</scope>
    <scope>TISSUE SPECIFICITY</scope>
    <source>
        <strain>C57BL/6J</strain>
        <tissue>Kidney</tissue>
    </source>
</reference>
<reference key="2">
    <citation type="journal article" date="2005" name="Science">
        <title>The transcriptional landscape of the mammalian genome.</title>
        <authorList>
            <person name="Carninci P."/>
            <person name="Kasukawa T."/>
            <person name="Katayama S."/>
            <person name="Gough J."/>
            <person name="Frith M.C."/>
            <person name="Maeda N."/>
            <person name="Oyama R."/>
            <person name="Ravasi T."/>
            <person name="Lenhard B."/>
            <person name="Wells C."/>
            <person name="Kodzius R."/>
            <person name="Shimokawa K."/>
            <person name="Bajic V.B."/>
            <person name="Brenner S.E."/>
            <person name="Batalov S."/>
            <person name="Forrest A.R."/>
            <person name="Zavolan M."/>
            <person name="Davis M.J."/>
            <person name="Wilming L.G."/>
            <person name="Aidinis V."/>
            <person name="Allen J.E."/>
            <person name="Ambesi-Impiombato A."/>
            <person name="Apweiler R."/>
            <person name="Aturaliya R.N."/>
            <person name="Bailey T.L."/>
            <person name="Bansal M."/>
            <person name="Baxter L."/>
            <person name="Beisel K.W."/>
            <person name="Bersano T."/>
            <person name="Bono H."/>
            <person name="Chalk A.M."/>
            <person name="Chiu K.P."/>
            <person name="Choudhary V."/>
            <person name="Christoffels A."/>
            <person name="Clutterbuck D.R."/>
            <person name="Crowe M.L."/>
            <person name="Dalla E."/>
            <person name="Dalrymple B.P."/>
            <person name="de Bono B."/>
            <person name="Della Gatta G."/>
            <person name="di Bernardo D."/>
            <person name="Down T."/>
            <person name="Engstrom P."/>
            <person name="Fagiolini M."/>
            <person name="Faulkner G."/>
            <person name="Fletcher C.F."/>
            <person name="Fukushima T."/>
            <person name="Furuno M."/>
            <person name="Futaki S."/>
            <person name="Gariboldi M."/>
            <person name="Georgii-Hemming P."/>
            <person name="Gingeras T.R."/>
            <person name="Gojobori T."/>
            <person name="Green R.E."/>
            <person name="Gustincich S."/>
            <person name="Harbers M."/>
            <person name="Hayashi Y."/>
            <person name="Hensch T.K."/>
            <person name="Hirokawa N."/>
            <person name="Hill D."/>
            <person name="Huminiecki L."/>
            <person name="Iacono M."/>
            <person name="Ikeo K."/>
            <person name="Iwama A."/>
            <person name="Ishikawa T."/>
            <person name="Jakt M."/>
            <person name="Kanapin A."/>
            <person name="Katoh M."/>
            <person name="Kawasawa Y."/>
            <person name="Kelso J."/>
            <person name="Kitamura H."/>
            <person name="Kitano H."/>
            <person name="Kollias G."/>
            <person name="Krishnan S.P."/>
            <person name="Kruger A."/>
            <person name="Kummerfeld S.K."/>
            <person name="Kurochkin I.V."/>
            <person name="Lareau L.F."/>
            <person name="Lazarevic D."/>
            <person name="Lipovich L."/>
            <person name="Liu J."/>
            <person name="Liuni S."/>
            <person name="McWilliam S."/>
            <person name="Madan Babu M."/>
            <person name="Madera M."/>
            <person name="Marchionni L."/>
            <person name="Matsuda H."/>
            <person name="Matsuzawa S."/>
            <person name="Miki H."/>
            <person name="Mignone F."/>
            <person name="Miyake S."/>
            <person name="Morris K."/>
            <person name="Mottagui-Tabar S."/>
            <person name="Mulder N."/>
            <person name="Nakano N."/>
            <person name="Nakauchi H."/>
            <person name="Ng P."/>
            <person name="Nilsson R."/>
            <person name="Nishiguchi S."/>
            <person name="Nishikawa S."/>
            <person name="Nori F."/>
            <person name="Ohara O."/>
            <person name="Okazaki Y."/>
            <person name="Orlando V."/>
            <person name="Pang K.C."/>
            <person name="Pavan W.J."/>
            <person name="Pavesi G."/>
            <person name="Pesole G."/>
            <person name="Petrovsky N."/>
            <person name="Piazza S."/>
            <person name="Reed J."/>
            <person name="Reid J.F."/>
            <person name="Ring B.Z."/>
            <person name="Ringwald M."/>
            <person name="Rost B."/>
            <person name="Ruan Y."/>
            <person name="Salzberg S.L."/>
            <person name="Sandelin A."/>
            <person name="Schneider C."/>
            <person name="Schoenbach C."/>
            <person name="Sekiguchi K."/>
            <person name="Semple C.A."/>
            <person name="Seno S."/>
            <person name="Sessa L."/>
            <person name="Sheng Y."/>
            <person name="Shibata Y."/>
            <person name="Shimada H."/>
            <person name="Shimada K."/>
            <person name="Silva D."/>
            <person name="Sinclair B."/>
            <person name="Sperling S."/>
            <person name="Stupka E."/>
            <person name="Sugiura K."/>
            <person name="Sultana R."/>
            <person name="Takenaka Y."/>
            <person name="Taki K."/>
            <person name="Tammoja K."/>
            <person name="Tan S.L."/>
            <person name="Tang S."/>
            <person name="Taylor M.S."/>
            <person name="Tegner J."/>
            <person name="Teichmann S.A."/>
            <person name="Ueda H.R."/>
            <person name="van Nimwegen E."/>
            <person name="Verardo R."/>
            <person name="Wei C.L."/>
            <person name="Yagi K."/>
            <person name="Yamanishi H."/>
            <person name="Zabarovsky E."/>
            <person name="Zhu S."/>
            <person name="Zimmer A."/>
            <person name="Hide W."/>
            <person name="Bult C."/>
            <person name="Grimmond S.M."/>
            <person name="Teasdale R.D."/>
            <person name="Liu E.T."/>
            <person name="Brusic V."/>
            <person name="Quackenbush J."/>
            <person name="Wahlestedt C."/>
            <person name="Mattick J.S."/>
            <person name="Hume D.A."/>
            <person name="Kai C."/>
            <person name="Sasaki D."/>
            <person name="Tomaru Y."/>
            <person name="Fukuda S."/>
            <person name="Kanamori-Katayama M."/>
            <person name="Suzuki M."/>
            <person name="Aoki J."/>
            <person name="Arakawa T."/>
            <person name="Iida J."/>
            <person name="Imamura K."/>
            <person name="Itoh M."/>
            <person name="Kato T."/>
            <person name="Kawaji H."/>
            <person name="Kawagashira N."/>
            <person name="Kawashima T."/>
            <person name="Kojima M."/>
            <person name="Kondo S."/>
            <person name="Konno H."/>
            <person name="Nakano K."/>
            <person name="Ninomiya N."/>
            <person name="Nishio T."/>
            <person name="Okada M."/>
            <person name="Plessy C."/>
            <person name="Shibata K."/>
            <person name="Shiraki T."/>
            <person name="Suzuki S."/>
            <person name="Tagami M."/>
            <person name="Waki K."/>
            <person name="Watahiki A."/>
            <person name="Okamura-Oho Y."/>
            <person name="Suzuki H."/>
            <person name="Kawai J."/>
            <person name="Hayashizaki Y."/>
        </authorList>
    </citation>
    <scope>NUCLEOTIDE SEQUENCE [LARGE SCALE MRNA] (ISOFORM 2)</scope>
    <source>
        <strain>C57BL/6J</strain>
    </source>
</reference>
<reference key="3">
    <citation type="journal article" date="2009" name="PLoS Biol.">
        <title>Lineage-specific biology revealed by a finished genome assembly of the mouse.</title>
        <authorList>
            <person name="Church D.M."/>
            <person name="Goodstadt L."/>
            <person name="Hillier L.W."/>
            <person name="Zody M.C."/>
            <person name="Goldstein S."/>
            <person name="She X."/>
            <person name="Bult C.J."/>
            <person name="Agarwala R."/>
            <person name="Cherry J.L."/>
            <person name="DiCuccio M."/>
            <person name="Hlavina W."/>
            <person name="Kapustin Y."/>
            <person name="Meric P."/>
            <person name="Maglott D."/>
            <person name="Birtle Z."/>
            <person name="Marques A.C."/>
            <person name="Graves T."/>
            <person name="Zhou S."/>
            <person name="Teague B."/>
            <person name="Potamousis K."/>
            <person name="Churas C."/>
            <person name="Place M."/>
            <person name="Herschleb J."/>
            <person name="Runnheim R."/>
            <person name="Forrest D."/>
            <person name="Amos-Landgraf J."/>
            <person name="Schwartz D.C."/>
            <person name="Cheng Z."/>
            <person name="Lindblad-Toh K."/>
            <person name="Eichler E.E."/>
            <person name="Ponting C.P."/>
        </authorList>
    </citation>
    <scope>NUCLEOTIDE SEQUENCE [LARGE SCALE GENOMIC DNA]</scope>
    <source>
        <strain>C57BL/6J</strain>
    </source>
</reference>
<reference key="4">
    <citation type="submission" date="2005-07" db="EMBL/GenBank/DDBJ databases">
        <authorList>
            <person name="Mural R.J."/>
            <person name="Adams M.D."/>
            <person name="Myers E.W."/>
            <person name="Smith H.O."/>
            <person name="Venter J.C."/>
        </authorList>
    </citation>
    <scope>NUCLEOTIDE SEQUENCE [LARGE SCALE GENOMIC DNA]</scope>
</reference>
<reference key="5">
    <citation type="journal article" date="2004" name="Genome Res.">
        <title>The status, quality, and expansion of the NIH full-length cDNA project: the Mammalian Gene Collection (MGC).</title>
        <authorList>
            <consortium name="The MGC Project Team"/>
        </authorList>
    </citation>
    <scope>NUCLEOTIDE SEQUENCE [LARGE SCALE MRNA] (ISOFORM 1)</scope>
    <source>
        <strain>FVB/N</strain>
        <tissue>Mammary tumor</tissue>
    </source>
</reference>
<reference key="6">
    <citation type="journal article" date="2010" name="Cell">
        <title>A tissue-specific atlas of mouse protein phosphorylation and expression.</title>
        <authorList>
            <person name="Huttlin E.L."/>
            <person name="Jedrychowski M.P."/>
            <person name="Elias J.E."/>
            <person name="Goswami T."/>
            <person name="Rad R."/>
            <person name="Beausoleil S.A."/>
            <person name="Villen J."/>
            <person name="Haas W."/>
            <person name="Sowa M.E."/>
            <person name="Gygi S.P."/>
        </authorList>
    </citation>
    <scope>IDENTIFICATION BY MASS SPECTROMETRY [LARGE SCALE ANALYSIS]</scope>
    <source>
        <tissue>Brown adipose tissue</tissue>
        <tissue>Heart</tissue>
        <tissue>Kidney</tissue>
        <tissue>Liver</tissue>
        <tissue>Pancreas</tissue>
    </source>
</reference>
<reference key="7">
    <citation type="journal article" date="2024" name="Nature">
        <title>PTER is a N-acetyltaurine hydrolase that regulates feeding and obesity.</title>
        <authorList>
            <person name="Wei W."/>
            <person name="Lyu X."/>
            <person name="Markhard A.L."/>
            <person name="Fu S."/>
            <person name="Mardjuki R.E."/>
            <person name="Cavanagh P.E."/>
            <person name="Zeng X."/>
            <person name="Rajniak J."/>
            <person name="Lu N."/>
            <person name="Xiao S."/>
            <person name="Zhao M."/>
            <person name="Moya-Garzon M.D."/>
            <person name="Truong S.D."/>
            <person name="Chou J.C."/>
            <person name="Wat L.W."/>
            <person name="Chidambaranathan-Reghupaty S."/>
            <person name="Coassolo L."/>
            <person name="Xu D."/>
            <person name="Shen F."/>
            <person name="Huang W."/>
            <person name="Ramirez C.B."/>
            <person name="Jang C."/>
            <person name="Li L."/>
            <person name="Svensson K.J."/>
            <person name="Fischbach M.A."/>
            <person name="Long J.Z."/>
        </authorList>
    </citation>
    <scope>FUNCTION</scope>
    <scope>CATALYTIC ACTIVITY</scope>
    <scope>BIOPHYSICOCHEMICAL PROPERTIES</scope>
    <scope>SUBCELLULAR LOCATION</scope>
    <scope>TISSUE SPECIFICITY</scope>
    <scope>DISRUPTION PHENOTYPE</scope>
    <scope>MUTAGENESIS OF HIS-26; HIS-28; TYR-65; GLU-169; HIS-201; ARG-204; HIS-230; ARG-233; LEU-255; THR-258; LEU-260; TYR-263; ASP-298; HIS-300 AND ARG-304</scope>
</reference>